<gene>
    <name evidence="1" type="primary">nuoB</name>
    <name type="ordered locus">BWG_2061</name>
</gene>
<proteinExistence type="inferred from homology"/>
<feature type="chain" id="PRO_1000214858" description="NADH-quinone oxidoreductase subunit B">
    <location>
        <begin position="1"/>
        <end position="220"/>
    </location>
</feature>
<feature type="binding site" evidence="1">
    <location>
        <position position="63"/>
    </location>
    <ligand>
        <name>[4Fe-4S] cluster</name>
        <dbReference type="ChEBI" id="CHEBI:49883"/>
    </ligand>
</feature>
<feature type="binding site" evidence="1">
    <location>
        <position position="64"/>
    </location>
    <ligand>
        <name>[4Fe-4S] cluster</name>
        <dbReference type="ChEBI" id="CHEBI:49883"/>
    </ligand>
</feature>
<feature type="binding site" evidence="1">
    <location>
        <position position="129"/>
    </location>
    <ligand>
        <name>[4Fe-4S] cluster</name>
        <dbReference type="ChEBI" id="CHEBI:49883"/>
    </ligand>
</feature>
<feature type="binding site" evidence="1">
    <location>
        <position position="158"/>
    </location>
    <ligand>
        <name>[4Fe-4S] cluster</name>
        <dbReference type="ChEBI" id="CHEBI:49883"/>
    </ligand>
</feature>
<sequence length="220" mass="25056">MDYTLTRIDPNGENDRYPLQKQEIVTDPLEQEVNKNVFMGKLNDMVNWGRKNSIWPYNFGLSCCYVEMVTSFTAVHDVARFGAEVLRASPRQADLMVVAGTCFTKMAPVIQRLYDQMLEPKWVISMGACANSGGMYDIYSVVQGVDKFIPVDVYIPGCPPRPEAYMQALMLLQESIGKERRPLSWVVGDQGVYRANMQSERERKRGERIAVTNLRTPDEI</sequence>
<reference key="1">
    <citation type="journal article" date="2009" name="J. Bacteriol.">
        <title>Genomic sequencing reveals regulatory mutations and recombinational events in the widely used MC4100 lineage of Escherichia coli K-12.</title>
        <authorList>
            <person name="Ferenci T."/>
            <person name="Zhou Z."/>
            <person name="Betteridge T."/>
            <person name="Ren Y."/>
            <person name="Liu Y."/>
            <person name="Feng L."/>
            <person name="Reeves P.R."/>
            <person name="Wang L."/>
        </authorList>
    </citation>
    <scope>NUCLEOTIDE SEQUENCE [LARGE SCALE GENOMIC DNA]</scope>
    <source>
        <strain>K12 / MC4100 / BW2952</strain>
    </source>
</reference>
<comment type="function">
    <text evidence="1">NDH-1 shuttles electrons from NADH, via FMN and iron-sulfur (Fe-S) centers, to quinones in the respiratory chain. The immediate electron acceptor for the enzyme in this species is believed to be ubiquinone. Couples the redox reaction to proton translocation (for every two electrons transferred, four hydrogen ions are translocated across the cytoplasmic membrane), and thus conserves the redox energy in a proton gradient.</text>
</comment>
<comment type="catalytic activity">
    <reaction evidence="1">
        <text>a quinone + NADH + 5 H(+)(in) = a quinol + NAD(+) + 4 H(+)(out)</text>
        <dbReference type="Rhea" id="RHEA:57888"/>
        <dbReference type="ChEBI" id="CHEBI:15378"/>
        <dbReference type="ChEBI" id="CHEBI:24646"/>
        <dbReference type="ChEBI" id="CHEBI:57540"/>
        <dbReference type="ChEBI" id="CHEBI:57945"/>
        <dbReference type="ChEBI" id="CHEBI:132124"/>
    </reaction>
</comment>
<comment type="cofactor">
    <cofactor evidence="1">
        <name>[4Fe-4S] cluster</name>
        <dbReference type="ChEBI" id="CHEBI:49883"/>
    </cofactor>
    <text evidence="1">Binds 1 [4Fe-4S] cluster.</text>
</comment>
<comment type="subunit">
    <text evidence="1">NDH-1 is composed of 13 different subunits. Subunits NuoB, CD, E, F, and G constitute the peripheral sector of the complex.</text>
</comment>
<comment type="subcellular location">
    <subcellularLocation>
        <location evidence="1">Cell inner membrane</location>
        <topology evidence="1">Peripheral membrane protein</topology>
        <orientation evidence="1">Cytoplasmic side</orientation>
    </subcellularLocation>
</comment>
<comment type="similarity">
    <text evidence="1">Belongs to the complex I 20 kDa subunit family.</text>
</comment>
<protein>
    <recommendedName>
        <fullName evidence="1">NADH-quinone oxidoreductase subunit B</fullName>
        <ecNumber evidence="1">7.1.1.-</ecNumber>
    </recommendedName>
    <alternativeName>
        <fullName evidence="1">NADH dehydrogenase I subunit B</fullName>
    </alternativeName>
    <alternativeName>
        <fullName evidence="1">NDH-1 subunit B</fullName>
    </alternativeName>
</protein>
<dbReference type="EC" id="7.1.1.-" evidence="1"/>
<dbReference type="EMBL" id="CP001396">
    <property type="protein sequence ID" value="ACR63865.1"/>
    <property type="molecule type" value="Genomic_DNA"/>
</dbReference>
<dbReference type="RefSeq" id="WP_000386733.1">
    <property type="nucleotide sequence ID" value="NC_012759.1"/>
</dbReference>
<dbReference type="SMR" id="C4ZUD0"/>
<dbReference type="GeneID" id="93774887"/>
<dbReference type="KEGG" id="ebw:BWG_2061"/>
<dbReference type="HOGENOM" id="CLU_055737_7_3_6"/>
<dbReference type="GO" id="GO:0005886">
    <property type="term" value="C:plasma membrane"/>
    <property type="evidence" value="ECO:0007669"/>
    <property type="project" value="UniProtKB-SubCell"/>
</dbReference>
<dbReference type="GO" id="GO:0045271">
    <property type="term" value="C:respiratory chain complex I"/>
    <property type="evidence" value="ECO:0007669"/>
    <property type="project" value="TreeGrafter"/>
</dbReference>
<dbReference type="GO" id="GO:0051539">
    <property type="term" value="F:4 iron, 4 sulfur cluster binding"/>
    <property type="evidence" value="ECO:0007669"/>
    <property type="project" value="UniProtKB-KW"/>
</dbReference>
<dbReference type="GO" id="GO:0005506">
    <property type="term" value="F:iron ion binding"/>
    <property type="evidence" value="ECO:0007669"/>
    <property type="project" value="UniProtKB-UniRule"/>
</dbReference>
<dbReference type="GO" id="GO:0008137">
    <property type="term" value="F:NADH dehydrogenase (ubiquinone) activity"/>
    <property type="evidence" value="ECO:0007669"/>
    <property type="project" value="InterPro"/>
</dbReference>
<dbReference type="GO" id="GO:0050136">
    <property type="term" value="F:NADH:ubiquinone reductase (non-electrogenic) activity"/>
    <property type="evidence" value="ECO:0007669"/>
    <property type="project" value="UniProtKB-UniRule"/>
</dbReference>
<dbReference type="GO" id="GO:0048038">
    <property type="term" value="F:quinone binding"/>
    <property type="evidence" value="ECO:0007669"/>
    <property type="project" value="UniProtKB-KW"/>
</dbReference>
<dbReference type="GO" id="GO:0009060">
    <property type="term" value="P:aerobic respiration"/>
    <property type="evidence" value="ECO:0007669"/>
    <property type="project" value="TreeGrafter"/>
</dbReference>
<dbReference type="GO" id="GO:0015990">
    <property type="term" value="P:electron transport coupled proton transport"/>
    <property type="evidence" value="ECO:0007669"/>
    <property type="project" value="TreeGrafter"/>
</dbReference>
<dbReference type="FunFam" id="3.40.50.12280:FF:000002">
    <property type="entry name" value="NADH-quinone oxidoreductase subunit B"/>
    <property type="match status" value="1"/>
</dbReference>
<dbReference type="Gene3D" id="3.40.50.12280">
    <property type="match status" value="1"/>
</dbReference>
<dbReference type="HAMAP" id="MF_01356">
    <property type="entry name" value="NDH1_NuoB"/>
    <property type="match status" value="1"/>
</dbReference>
<dbReference type="InterPro" id="IPR006137">
    <property type="entry name" value="NADH_UbQ_OxRdtase-like_20kDa"/>
</dbReference>
<dbReference type="InterPro" id="IPR006138">
    <property type="entry name" value="NADH_UQ_OxRdtase_20Kd_su"/>
</dbReference>
<dbReference type="NCBIfam" id="TIGR01957">
    <property type="entry name" value="nuoB_fam"/>
    <property type="match status" value="1"/>
</dbReference>
<dbReference type="NCBIfam" id="NF005012">
    <property type="entry name" value="PRK06411.1"/>
    <property type="match status" value="1"/>
</dbReference>
<dbReference type="PANTHER" id="PTHR11995">
    <property type="entry name" value="NADH DEHYDROGENASE"/>
    <property type="match status" value="1"/>
</dbReference>
<dbReference type="PANTHER" id="PTHR11995:SF14">
    <property type="entry name" value="NADH DEHYDROGENASE [UBIQUINONE] IRON-SULFUR PROTEIN 7, MITOCHONDRIAL"/>
    <property type="match status" value="1"/>
</dbReference>
<dbReference type="Pfam" id="PF01058">
    <property type="entry name" value="Oxidored_q6"/>
    <property type="match status" value="1"/>
</dbReference>
<dbReference type="SUPFAM" id="SSF56770">
    <property type="entry name" value="HydA/Nqo6-like"/>
    <property type="match status" value="1"/>
</dbReference>
<dbReference type="PROSITE" id="PS01150">
    <property type="entry name" value="COMPLEX1_20K"/>
    <property type="match status" value="1"/>
</dbReference>
<organism>
    <name type="scientific">Escherichia coli (strain K12 / MC4100 / BW2952)</name>
    <dbReference type="NCBI Taxonomy" id="595496"/>
    <lineage>
        <taxon>Bacteria</taxon>
        <taxon>Pseudomonadati</taxon>
        <taxon>Pseudomonadota</taxon>
        <taxon>Gammaproteobacteria</taxon>
        <taxon>Enterobacterales</taxon>
        <taxon>Enterobacteriaceae</taxon>
        <taxon>Escherichia</taxon>
    </lineage>
</organism>
<keyword id="KW-0004">4Fe-4S</keyword>
<keyword id="KW-0997">Cell inner membrane</keyword>
<keyword id="KW-1003">Cell membrane</keyword>
<keyword id="KW-0408">Iron</keyword>
<keyword id="KW-0411">Iron-sulfur</keyword>
<keyword id="KW-0472">Membrane</keyword>
<keyword id="KW-0479">Metal-binding</keyword>
<keyword id="KW-0520">NAD</keyword>
<keyword id="KW-0874">Quinone</keyword>
<keyword id="KW-1278">Translocase</keyword>
<keyword id="KW-0813">Transport</keyword>
<keyword id="KW-0830">Ubiquinone</keyword>
<name>NUOB_ECOBW</name>
<evidence type="ECO:0000255" key="1">
    <source>
        <dbReference type="HAMAP-Rule" id="MF_01356"/>
    </source>
</evidence>
<accession>C4ZUD0</accession>